<proteinExistence type="inferred from homology"/>
<reference key="1">
    <citation type="journal article" date="2007" name="ISME J.">
        <title>Population level functional diversity in a microbial community revealed by comparative genomic and metagenomic analyses.</title>
        <authorList>
            <person name="Bhaya D."/>
            <person name="Grossman A.R."/>
            <person name="Steunou A.-S."/>
            <person name="Khuri N."/>
            <person name="Cohan F.M."/>
            <person name="Hamamura N."/>
            <person name="Melendrez M.C."/>
            <person name="Bateson M.M."/>
            <person name="Ward D.M."/>
            <person name="Heidelberg J.F."/>
        </authorList>
    </citation>
    <scope>NUCLEOTIDE SEQUENCE [LARGE SCALE GENOMIC DNA]</scope>
    <source>
        <strain>JA-2-3B'a(2-13)</strain>
    </source>
</reference>
<comment type="function">
    <text evidence="1">Phosphorolytic 3'-5' exoribonuclease that plays an important role in tRNA 3'-end maturation. Removes nucleotide residues following the 3'-CCA terminus of tRNAs; can also add nucleotides to the ends of RNA molecules by using nucleoside diphosphates as substrates, but this may not be physiologically important. Probably plays a role in initiation of 16S rRNA degradation (leading to ribosome degradation) during starvation.</text>
</comment>
<comment type="catalytic activity">
    <reaction evidence="1">
        <text>tRNA(n+1) + phosphate = tRNA(n) + a ribonucleoside 5'-diphosphate</text>
        <dbReference type="Rhea" id="RHEA:10628"/>
        <dbReference type="Rhea" id="RHEA-COMP:17343"/>
        <dbReference type="Rhea" id="RHEA-COMP:17344"/>
        <dbReference type="ChEBI" id="CHEBI:43474"/>
        <dbReference type="ChEBI" id="CHEBI:57930"/>
        <dbReference type="ChEBI" id="CHEBI:173114"/>
        <dbReference type="EC" id="2.7.7.56"/>
    </reaction>
</comment>
<comment type="subunit">
    <text evidence="1">Homohexameric ring arranged as a trimer of dimers.</text>
</comment>
<comment type="similarity">
    <text evidence="1">Belongs to the RNase PH family.</text>
</comment>
<dbReference type="EC" id="2.7.7.56" evidence="1"/>
<dbReference type="EMBL" id="CP000240">
    <property type="protein sequence ID" value="ABD02698.1"/>
    <property type="molecule type" value="Genomic_DNA"/>
</dbReference>
<dbReference type="RefSeq" id="WP_011433341.1">
    <property type="nucleotide sequence ID" value="NC_007776.1"/>
</dbReference>
<dbReference type="SMR" id="Q2JKT3"/>
<dbReference type="STRING" id="321332.CYB_1741"/>
<dbReference type="KEGG" id="cyb:CYB_1741"/>
<dbReference type="eggNOG" id="COG0689">
    <property type="taxonomic scope" value="Bacteria"/>
</dbReference>
<dbReference type="HOGENOM" id="CLU_050858_0_0_3"/>
<dbReference type="OrthoDB" id="9802265at2"/>
<dbReference type="Proteomes" id="UP000001938">
    <property type="component" value="Chromosome"/>
</dbReference>
<dbReference type="GO" id="GO:0000175">
    <property type="term" value="F:3'-5'-RNA exonuclease activity"/>
    <property type="evidence" value="ECO:0007669"/>
    <property type="project" value="UniProtKB-UniRule"/>
</dbReference>
<dbReference type="GO" id="GO:0000049">
    <property type="term" value="F:tRNA binding"/>
    <property type="evidence" value="ECO:0007669"/>
    <property type="project" value="UniProtKB-UniRule"/>
</dbReference>
<dbReference type="GO" id="GO:0009022">
    <property type="term" value="F:tRNA nucleotidyltransferase activity"/>
    <property type="evidence" value="ECO:0007669"/>
    <property type="project" value="UniProtKB-UniRule"/>
</dbReference>
<dbReference type="GO" id="GO:0016075">
    <property type="term" value="P:rRNA catabolic process"/>
    <property type="evidence" value="ECO:0007669"/>
    <property type="project" value="UniProtKB-UniRule"/>
</dbReference>
<dbReference type="GO" id="GO:0006364">
    <property type="term" value="P:rRNA processing"/>
    <property type="evidence" value="ECO:0007669"/>
    <property type="project" value="UniProtKB-KW"/>
</dbReference>
<dbReference type="GO" id="GO:0008033">
    <property type="term" value="P:tRNA processing"/>
    <property type="evidence" value="ECO:0007669"/>
    <property type="project" value="UniProtKB-UniRule"/>
</dbReference>
<dbReference type="CDD" id="cd11362">
    <property type="entry name" value="RNase_PH_bact"/>
    <property type="match status" value="1"/>
</dbReference>
<dbReference type="FunFam" id="3.30.230.70:FF:000003">
    <property type="entry name" value="Ribonuclease PH"/>
    <property type="match status" value="1"/>
</dbReference>
<dbReference type="Gene3D" id="3.30.230.70">
    <property type="entry name" value="GHMP Kinase, N-terminal domain"/>
    <property type="match status" value="1"/>
</dbReference>
<dbReference type="HAMAP" id="MF_00564">
    <property type="entry name" value="RNase_PH"/>
    <property type="match status" value="1"/>
</dbReference>
<dbReference type="InterPro" id="IPR001247">
    <property type="entry name" value="ExoRNase_PH_dom1"/>
</dbReference>
<dbReference type="InterPro" id="IPR015847">
    <property type="entry name" value="ExoRNase_PH_dom2"/>
</dbReference>
<dbReference type="InterPro" id="IPR036345">
    <property type="entry name" value="ExoRNase_PH_dom2_sf"/>
</dbReference>
<dbReference type="InterPro" id="IPR027408">
    <property type="entry name" value="PNPase/RNase_PH_dom_sf"/>
</dbReference>
<dbReference type="InterPro" id="IPR020568">
    <property type="entry name" value="Ribosomal_Su5_D2-typ_SF"/>
</dbReference>
<dbReference type="InterPro" id="IPR050080">
    <property type="entry name" value="RNase_PH"/>
</dbReference>
<dbReference type="InterPro" id="IPR002381">
    <property type="entry name" value="RNase_PH_bac-type"/>
</dbReference>
<dbReference type="InterPro" id="IPR018336">
    <property type="entry name" value="RNase_PH_CS"/>
</dbReference>
<dbReference type="NCBIfam" id="TIGR01966">
    <property type="entry name" value="RNasePH"/>
    <property type="match status" value="1"/>
</dbReference>
<dbReference type="PANTHER" id="PTHR11953">
    <property type="entry name" value="EXOSOME COMPLEX COMPONENT"/>
    <property type="match status" value="1"/>
</dbReference>
<dbReference type="PANTHER" id="PTHR11953:SF0">
    <property type="entry name" value="EXOSOME COMPLEX COMPONENT RRP41"/>
    <property type="match status" value="1"/>
</dbReference>
<dbReference type="Pfam" id="PF01138">
    <property type="entry name" value="RNase_PH"/>
    <property type="match status" value="1"/>
</dbReference>
<dbReference type="Pfam" id="PF03725">
    <property type="entry name" value="RNase_PH_C"/>
    <property type="match status" value="1"/>
</dbReference>
<dbReference type="SUPFAM" id="SSF55666">
    <property type="entry name" value="Ribonuclease PH domain 2-like"/>
    <property type="match status" value="1"/>
</dbReference>
<dbReference type="SUPFAM" id="SSF54211">
    <property type="entry name" value="Ribosomal protein S5 domain 2-like"/>
    <property type="match status" value="1"/>
</dbReference>
<dbReference type="PROSITE" id="PS01277">
    <property type="entry name" value="RIBONUCLEASE_PH"/>
    <property type="match status" value="1"/>
</dbReference>
<organism>
    <name type="scientific">Synechococcus sp. (strain JA-2-3B'a(2-13))</name>
    <name type="common">Cyanobacteria bacterium Yellowstone B-Prime</name>
    <dbReference type="NCBI Taxonomy" id="321332"/>
    <lineage>
        <taxon>Bacteria</taxon>
        <taxon>Bacillati</taxon>
        <taxon>Cyanobacteriota</taxon>
        <taxon>Cyanophyceae</taxon>
        <taxon>Synechococcales</taxon>
        <taxon>Synechococcaceae</taxon>
        <taxon>Synechococcus</taxon>
    </lineage>
</organism>
<accession>Q2JKT3</accession>
<protein>
    <recommendedName>
        <fullName evidence="1">Ribonuclease PH</fullName>
        <shortName evidence="1">RNase PH</shortName>
        <ecNumber evidence="1">2.7.7.56</ecNumber>
    </recommendedName>
    <alternativeName>
        <fullName evidence="1">tRNA nucleotidyltransferase</fullName>
    </alternativeName>
</protein>
<feature type="chain" id="PRO_1000129381" description="Ribonuclease PH">
    <location>
        <begin position="1"/>
        <end position="244"/>
    </location>
</feature>
<feature type="binding site" evidence="1">
    <location>
        <position position="87"/>
    </location>
    <ligand>
        <name>phosphate</name>
        <dbReference type="ChEBI" id="CHEBI:43474"/>
        <note>substrate</note>
    </ligand>
</feature>
<feature type="binding site" evidence="1">
    <location>
        <begin position="125"/>
        <end position="127"/>
    </location>
    <ligand>
        <name>phosphate</name>
        <dbReference type="ChEBI" id="CHEBI:43474"/>
        <note>substrate</note>
    </ligand>
</feature>
<gene>
    <name evidence="1" type="primary">rph</name>
    <name type="ordered locus">CYB_1741</name>
</gene>
<keyword id="KW-0548">Nucleotidyltransferase</keyword>
<keyword id="KW-1185">Reference proteome</keyword>
<keyword id="KW-0694">RNA-binding</keyword>
<keyword id="KW-0698">rRNA processing</keyword>
<keyword id="KW-0808">Transferase</keyword>
<keyword id="KW-0819">tRNA processing</keyword>
<keyword id="KW-0820">tRNA-binding</keyword>
<sequence>MSWQRPDNRTAAQLRPVSFERHFTRYAPGSVLVKFGHTHVLCTASVAEEVPPFLQNTGQGWLTAEYRMLPGATQQRQPREMLKLSGRTAEIQRLIGRSLRAALDFRKLGSRTITVDADVLQADGGTRTAAITGGYVALHDAITWLYKQGALDPAQGSPLRQQVAALSVGIVQGEVLVDLCYEEDSQAEVDMNIVMNEQGSFIEIQGTAEAACFSRPQLLQMLEMAQAGIQELLQAQRQALNLER</sequence>
<evidence type="ECO:0000255" key="1">
    <source>
        <dbReference type="HAMAP-Rule" id="MF_00564"/>
    </source>
</evidence>
<name>RNPH_SYNJB</name>